<comment type="catalytic activity">
    <reaction evidence="1">
        <text>(S)-2,3,4,5-tetrahydrodipicolinate + succinyl-CoA + H2O = (S)-2-succinylamino-6-oxoheptanedioate + CoA</text>
        <dbReference type="Rhea" id="RHEA:17325"/>
        <dbReference type="ChEBI" id="CHEBI:15377"/>
        <dbReference type="ChEBI" id="CHEBI:15685"/>
        <dbReference type="ChEBI" id="CHEBI:16845"/>
        <dbReference type="ChEBI" id="CHEBI:57287"/>
        <dbReference type="ChEBI" id="CHEBI:57292"/>
        <dbReference type="EC" id="2.3.1.117"/>
    </reaction>
</comment>
<comment type="pathway">
    <text evidence="1">Amino-acid biosynthesis; L-lysine biosynthesis via DAP pathway; LL-2,6-diaminopimelate from (S)-tetrahydrodipicolinate (succinylase route): step 1/3.</text>
</comment>
<comment type="subunit">
    <text evidence="1">Homotrimer.</text>
</comment>
<comment type="subcellular location">
    <subcellularLocation>
        <location evidence="1">Cytoplasm</location>
    </subcellularLocation>
</comment>
<comment type="similarity">
    <text evidence="1">Belongs to the transferase hexapeptide repeat family.</text>
</comment>
<accession>Q6D8E6</accession>
<proteinExistence type="inferred from homology"/>
<keyword id="KW-0012">Acyltransferase</keyword>
<keyword id="KW-0028">Amino-acid biosynthesis</keyword>
<keyword id="KW-0963">Cytoplasm</keyword>
<keyword id="KW-0220">Diaminopimelate biosynthesis</keyword>
<keyword id="KW-0457">Lysine biosynthesis</keyword>
<keyword id="KW-1185">Reference proteome</keyword>
<keyword id="KW-0677">Repeat</keyword>
<keyword id="KW-0808">Transferase</keyword>
<sequence>MHQQLQNIIETAFERRADITPANADTVTREAVNQAINLLDSGALRVAEKIDGQWVTHQWLKKAVLLSFRINDNQLIEGGETRFFDKVPMKFADYDEARFQREGVRVAPPASVRRGAYIARNTVLMPSYVNIGAYVDEGTMVDTWVTVGSCAQIGKNVHLSGGVGIGGVLEPLQANPTIIEDNCFIGARSEVVEGVVVEEGSVISMGVFISQSTRIYDRETGEIHYGRVPAGSVVVSGNLPSKDGSHSMYCAIIVKKVDAKTRGKVGINELLRSID</sequence>
<feature type="chain" id="PRO_0000196937" description="2,3,4,5-tetrahydropyridine-2,6-dicarboxylate N-succinyltransferase">
    <location>
        <begin position="1"/>
        <end position="275"/>
    </location>
</feature>
<feature type="binding site" evidence="1">
    <location>
        <position position="105"/>
    </location>
    <ligand>
        <name>substrate</name>
    </ligand>
</feature>
<feature type="binding site" evidence="1">
    <location>
        <position position="142"/>
    </location>
    <ligand>
        <name>substrate</name>
    </ligand>
</feature>
<evidence type="ECO:0000255" key="1">
    <source>
        <dbReference type="HAMAP-Rule" id="MF_00811"/>
    </source>
</evidence>
<dbReference type="EC" id="2.3.1.117" evidence="1"/>
<dbReference type="EMBL" id="BX950851">
    <property type="protein sequence ID" value="CAG73939.1"/>
    <property type="molecule type" value="Genomic_DNA"/>
</dbReference>
<dbReference type="RefSeq" id="WP_011092627.1">
    <property type="nucleotide sequence ID" value="NC_004547.2"/>
</dbReference>
<dbReference type="SMR" id="Q6D8E6"/>
<dbReference type="STRING" id="218491.ECA1028"/>
<dbReference type="GeneID" id="57207857"/>
<dbReference type="KEGG" id="eca:ECA1028"/>
<dbReference type="PATRIC" id="fig|218491.5.peg.1036"/>
<dbReference type="eggNOG" id="COG2171">
    <property type="taxonomic scope" value="Bacteria"/>
</dbReference>
<dbReference type="HOGENOM" id="CLU_050859_0_1_6"/>
<dbReference type="OrthoDB" id="9775362at2"/>
<dbReference type="UniPathway" id="UPA00034">
    <property type="reaction ID" value="UER00019"/>
</dbReference>
<dbReference type="Proteomes" id="UP000007966">
    <property type="component" value="Chromosome"/>
</dbReference>
<dbReference type="GO" id="GO:0005737">
    <property type="term" value="C:cytoplasm"/>
    <property type="evidence" value="ECO:0007669"/>
    <property type="project" value="UniProtKB-SubCell"/>
</dbReference>
<dbReference type="GO" id="GO:0008666">
    <property type="term" value="F:2,3,4,5-tetrahydropyridine-2,6-dicarboxylate N-succinyltransferase activity"/>
    <property type="evidence" value="ECO:0007669"/>
    <property type="project" value="UniProtKB-UniRule"/>
</dbReference>
<dbReference type="GO" id="GO:0016779">
    <property type="term" value="F:nucleotidyltransferase activity"/>
    <property type="evidence" value="ECO:0007669"/>
    <property type="project" value="TreeGrafter"/>
</dbReference>
<dbReference type="GO" id="GO:0019877">
    <property type="term" value="P:diaminopimelate biosynthetic process"/>
    <property type="evidence" value="ECO:0007669"/>
    <property type="project" value="UniProtKB-UniRule"/>
</dbReference>
<dbReference type="GO" id="GO:0009089">
    <property type="term" value="P:lysine biosynthetic process via diaminopimelate"/>
    <property type="evidence" value="ECO:0007669"/>
    <property type="project" value="UniProtKB-UniRule"/>
</dbReference>
<dbReference type="CDD" id="cd03350">
    <property type="entry name" value="LbH_THP_succinylT"/>
    <property type="match status" value="1"/>
</dbReference>
<dbReference type="Gene3D" id="2.160.10.10">
    <property type="entry name" value="Hexapeptide repeat proteins"/>
    <property type="match status" value="1"/>
</dbReference>
<dbReference type="Gene3D" id="1.10.166.10">
    <property type="entry name" value="Tetrahydrodipicolinate-N-succinyltransferase, N-terminal domain"/>
    <property type="match status" value="1"/>
</dbReference>
<dbReference type="HAMAP" id="MF_00811">
    <property type="entry name" value="DapD"/>
    <property type="match status" value="1"/>
</dbReference>
<dbReference type="InterPro" id="IPR005664">
    <property type="entry name" value="DapD_Trfase_Hexpep_rpt_fam"/>
</dbReference>
<dbReference type="InterPro" id="IPR001451">
    <property type="entry name" value="Hexapep"/>
</dbReference>
<dbReference type="InterPro" id="IPR018357">
    <property type="entry name" value="Hexapep_transf_CS"/>
</dbReference>
<dbReference type="InterPro" id="IPR023180">
    <property type="entry name" value="THP_succinylTrfase_dom1"/>
</dbReference>
<dbReference type="InterPro" id="IPR037133">
    <property type="entry name" value="THP_succinylTrfase_N_sf"/>
</dbReference>
<dbReference type="InterPro" id="IPR011004">
    <property type="entry name" value="Trimer_LpxA-like_sf"/>
</dbReference>
<dbReference type="NCBIfam" id="TIGR00965">
    <property type="entry name" value="dapD"/>
    <property type="match status" value="1"/>
</dbReference>
<dbReference type="NCBIfam" id="NF008808">
    <property type="entry name" value="PRK11830.1"/>
    <property type="match status" value="1"/>
</dbReference>
<dbReference type="PANTHER" id="PTHR19136:SF52">
    <property type="entry name" value="2,3,4,5-TETRAHYDROPYRIDINE-2,6-DICARBOXYLATE N-SUCCINYLTRANSFERASE"/>
    <property type="match status" value="1"/>
</dbReference>
<dbReference type="PANTHER" id="PTHR19136">
    <property type="entry name" value="MOLYBDENUM COFACTOR GUANYLYLTRANSFERASE"/>
    <property type="match status" value="1"/>
</dbReference>
<dbReference type="Pfam" id="PF14602">
    <property type="entry name" value="Hexapep_2"/>
    <property type="match status" value="1"/>
</dbReference>
<dbReference type="Pfam" id="PF14805">
    <property type="entry name" value="THDPS_N_2"/>
    <property type="match status" value="1"/>
</dbReference>
<dbReference type="SUPFAM" id="SSF51161">
    <property type="entry name" value="Trimeric LpxA-like enzymes"/>
    <property type="match status" value="1"/>
</dbReference>
<dbReference type="PROSITE" id="PS00101">
    <property type="entry name" value="HEXAPEP_TRANSFERASES"/>
    <property type="match status" value="1"/>
</dbReference>
<gene>
    <name evidence="1" type="primary">dapD</name>
    <name type="ordered locus">ECA1028</name>
</gene>
<reference key="1">
    <citation type="journal article" date="2004" name="Proc. Natl. Acad. Sci. U.S.A.">
        <title>Genome sequence of the enterobacterial phytopathogen Erwinia carotovora subsp. atroseptica and characterization of virulence factors.</title>
        <authorList>
            <person name="Bell K.S."/>
            <person name="Sebaihia M."/>
            <person name="Pritchard L."/>
            <person name="Holden M.T.G."/>
            <person name="Hyman L.J."/>
            <person name="Holeva M.C."/>
            <person name="Thomson N.R."/>
            <person name="Bentley S.D."/>
            <person name="Churcher L.J.C."/>
            <person name="Mungall K."/>
            <person name="Atkin R."/>
            <person name="Bason N."/>
            <person name="Brooks K."/>
            <person name="Chillingworth T."/>
            <person name="Clark K."/>
            <person name="Doggett J."/>
            <person name="Fraser A."/>
            <person name="Hance Z."/>
            <person name="Hauser H."/>
            <person name="Jagels K."/>
            <person name="Moule S."/>
            <person name="Norbertczak H."/>
            <person name="Ormond D."/>
            <person name="Price C."/>
            <person name="Quail M.A."/>
            <person name="Sanders M."/>
            <person name="Walker D."/>
            <person name="Whitehead S."/>
            <person name="Salmond G.P.C."/>
            <person name="Birch P.R.J."/>
            <person name="Parkhill J."/>
            <person name="Toth I.K."/>
        </authorList>
    </citation>
    <scope>NUCLEOTIDE SEQUENCE [LARGE SCALE GENOMIC DNA]</scope>
    <source>
        <strain>SCRI 1043 / ATCC BAA-672</strain>
    </source>
</reference>
<protein>
    <recommendedName>
        <fullName evidence="1">2,3,4,5-tetrahydropyridine-2,6-dicarboxylate N-succinyltransferase</fullName>
        <ecNumber evidence="1">2.3.1.117</ecNumber>
    </recommendedName>
    <alternativeName>
        <fullName evidence="1">Tetrahydrodipicolinate N-succinyltransferase</fullName>
        <shortName evidence="1">THDP succinyltransferase</shortName>
        <shortName evidence="1">THP succinyltransferase</shortName>
        <shortName evidence="1">Tetrahydropicolinate succinylase</shortName>
    </alternativeName>
</protein>
<name>DAPD_PECAS</name>
<organism>
    <name type="scientific">Pectobacterium atrosepticum (strain SCRI 1043 / ATCC BAA-672)</name>
    <name type="common">Erwinia carotovora subsp. atroseptica</name>
    <dbReference type="NCBI Taxonomy" id="218491"/>
    <lineage>
        <taxon>Bacteria</taxon>
        <taxon>Pseudomonadati</taxon>
        <taxon>Pseudomonadota</taxon>
        <taxon>Gammaproteobacteria</taxon>
        <taxon>Enterobacterales</taxon>
        <taxon>Pectobacteriaceae</taxon>
        <taxon>Pectobacterium</taxon>
    </lineage>
</organism>